<comment type="subunit">
    <text evidence="1">Part of the 30S ribosomal subunit.</text>
</comment>
<comment type="similarity">
    <text evidence="1">Belongs to the eukaryotic ribosomal protein eS8 family.</text>
</comment>
<name>RS8E_METS3</name>
<gene>
    <name evidence="1" type="primary">rps8e</name>
    <name type="ordered locus">Msm_1486</name>
</gene>
<organism>
    <name type="scientific">Methanobrevibacter smithii (strain ATCC 35061 / DSM 861 / OCM 144 / PS)</name>
    <dbReference type="NCBI Taxonomy" id="420247"/>
    <lineage>
        <taxon>Archaea</taxon>
        <taxon>Methanobacteriati</taxon>
        <taxon>Methanobacteriota</taxon>
        <taxon>Methanomada group</taxon>
        <taxon>Methanobacteria</taxon>
        <taxon>Methanobacteriales</taxon>
        <taxon>Methanobacteriaceae</taxon>
        <taxon>Methanobrevibacter</taxon>
    </lineage>
</organism>
<feature type="chain" id="PRO_0000304169" description="Small ribosomal subunit protein eS8">
    <location>
        <begin position="1"/>
        <end position="125"/>
    </location>
</feature>
<feature type="region of interest" description="Disordered" evidence="2">
    <location>
        <begin position="1"/>
        <end position="38"/>
    </location>
</feature>
<feature type="compositionally biased region" description="Polar residues" evidence="2">
    <location>
        <begin position="1"/>
        <end position="11"/>
    </location>
</feature>
<feature type="compositionally biased region" description="Basic and acidic residues" evidence="2">
    <location>
        <begin position="25"/>
        <end position="38"/>
    </location>
</feature>
<evidence type="ECO:0000255" key="1">
    <source>
        <dbReference type="HAMAP-Rule" id="MF_00029"/>
    </source>
</evidence>
<evidence type="ECO:0000256" key="2">
    <source>
        <dbReference type="SAM" id="MobiDB-lite"/>
    </source>
</evidence>
<evidence type="ECO:0000305" key="3"/>
<proteinExistence type="inferred from homology"/>
<reference key="1">
    <citation type="journal article" date="2007" name="Proc. Natl. Acad. Sci. U.S.A.">
        <title>Genomic and metabolic adaptations of Methanobrevibacter smithii to the human gut.</title>
        <authorList>
            <person name="Samuel B.S."/>
            <person name="Hansen E.E."/>
            <person name="Manchester J.K."/>
            <person name="Coutinho P.M."/>
            <person name="Henrissat B."/>
            <person name="Fulton R."/>
            <person name="Latreille P."/>
            <person name="Kim K."/>
            <person name="Wilson R.K."/>
            <person name="Gordon J.I."/>
        </authorList>
    </citation>
    <scope>NUCLEOTIDE SEQUENCE [LARGE SCALE GENOMIC DNA]</scope>
    <source>
        <strain>ATCC 35061 / DSM 861 / OCM 144 / PS</strain>
    </source>
</reference>
<sequence length="125" mass="13456">MAISQGKSTRLPSGARNVANRGKRKAELGRDPAETRVDEKRLKKIRTRGGNEKLRLATANKMNLTDPATGKSQVVDVLGVIENSANPNYVRRNIITKGAIVETPEGNAKVTSRPGQDGVLNGILI</sequence>
<accession>A5UNB3</accession>
<protein>
    <recommendedName>
        <fullName evidence="1">Small ribosomal subunit protein eS8</fullName>
    </recommendedName>
    <alternativeName>
        <fullName evidence="3">30S ribosomal protein S8e</fullName>
    </alternativeName>
</protein>
<keyword id="KW-0687">Ribonucleoprotein</keyword>
<keyword id="KW-0689">Ribosomal protein</keyword>
<dbReference type="EMBL" id="CP000678">
    <property type="protein sequence ID" value="ABQ87691.1"/>
    <property type="molecule type" value="Genomic_DNA"/>
</dbReference>
<dbReference type="RefSeq" id="WP_004033374.1">
    <property type="nucleotide sequence ID" value="NZ_CP117965.1"/>
</dbReference>
<dbReference type="SMR" id="A5UNB3"/>
<dbReference type="STRING" id="420247.Msm_1486"/>
<dbReference type="EnsemblBacteria" id="ABQ87691">
    <property type="protein sequence ID" value="ABQ87691"/>
    <property type="gene ID" value="Msm_1486"/>
</dbReference>
<dbReference type="KEGG" id="msi:Msm_1486"/>
<dbReference type="PATRIC" id="fig|420247.28.peg.1479"/>
<dbReference type="eggNOG" id="arCOG04154">
    <property type="taxonomic scope" value="Archaea"/>
</dbReference>
<dbReference type="HOGENOM" id="CLU_080597_2_1_2"/>
<dbReference type="Proteomes" id="UP000001992">
    <property type="component" value="Chromosome"/>
</dbReference>
<dbReference type="GO" id="GO:1990904">
    <property type="term" value="C:ribonucleoprotein complex"/>
    <property type="evidence" value="ECO:0007669"/>
    <property type="project" value="UniProtKB-KW"/>
</dbReference>
<dbReference type="GO" id="GO:0005840">
    <property type="term" value="C:ribosome"/>
    <property type="evidence" value="ECO:0007669"/>
    <property type="project" value="UniProtKB-KW"/>
</dbReference>
<dbReference type="GO" id="GO:0003735">
    <property type="term" value="F:structural constituent of ribosome"/>
    <property type="evidence" value="ECO:0007669"/>
    <property type="project" value="InterPro"/>
</dbReference>
<dbReference type="GO" id="GO:0006412">
    <property type="term" value="P:translation"/>
    <property type="evidence" value="ECO:0007669"/>
    <property type="project" value="UniProtKB-UniRule"/>
</dbReference>
<dbReference type="CDD" id="cd11382">
    <property type="entry name" value="Ribosomal_S8e"/>
    <property type="match status" value="1"/>
</dbReference>
<dbReference type="Gene3D" id="2.40.10.310">
    <property type="match status" value="1"/>
</dbReference>
<dbReference type="HAMAP" id="MF_00029">
    <property type="entry name" value="Ribosomal_eS8"/>
    <property type="match status" value="1"/>
</dbReference>
<dbReference type="InterPro" id="IPR001047">
    <property type="entry name" value="Ribosomal_eS8"/>
</dbReference>
<dbReference type="InterPro" id="IPR018283">
    <property type="entry name" value="Ribosomal_eS8_CS"/>
</dbReference>
<dbReference type="InterPro" id="IPR020919">
    <property type="entry name" value="Ribosomal_protein_eS8_arc"/>
</dbReference>
<dbReference type="InterPro" id="IPR022309">
    <property type="entry name" value="Ribosomal_Se8/biogenesis_NSA2"/>
</dbReference>
<dbReference type="NCBIfam" id="TIGR00307">
    <property type="entry name" value="eS8"/>
    <property type="match status" value="1"/>
</dbReference>
<dbReference type="PANTHER" id="PTHR10394">
    <property type="entry name" value="40S RIBOSOMAL PROTEIN S8"/>
    <property type="match status" value="1"/>
</dbReference>
<dbReference type="Pfam" id="PF01201">
    <property type="entry name" value="Ribosomal_S8e"/>
    <property type="match status" value="1"/>
</dbReference>
<dbReference type="PROSITE" id="PS01193">
    <property type="entry name" value="RIBOSOMAL_S8E"/>
    <property type="match status" value="1"/>
</dbReference>